<sequence length="380" mass="41595">MLRRKPSNASEKEPTQKKKLSLQRSSSFKDFAKSKPSSPVVSEKEFNLDDNIPEDDSGVPTPEDAGKSGKKLGKKWRAVISRTMNRKMGKMMVKALSEEMADTLEEGSASPTSPDYSLDSPGPEKMALAFSEQEEHELPVLSRQASTGSELCSPSPGSGSFGEEPPAPQYTGPFCGRARVHTDFTPSPYDHDSLKLQKGDVIQIIEKPPVGTWLGLLNGKVGSFKFIYVDVLPEEAVGHARPSRRQSKGKRPKPKTLHELLERIGLEEHTSTLLLNGYQTLEDFKELRETHLNELNIMDPQHRAKLLTAAELLLDYDTGSEEAEEGAESSQEPVAHTVSEPKVDIPRDSGCFEGSESGRDDAELAGTEEQLQGLSLAGAP</sequence>
<name>SASH3_HUMAN</name>
<organism>
    <name type="scientific">Homo sapiens</name>
    <name type="common">Human</name>
    <dbReference type="NCBI Taxonomy" id="9606"/>
    <lineage>
        <taxon>Eukaryota</taxon>
        <taxon>Metazoa</taxon>
        <taxon>Chordata</taxon>
        <taxon>Craniata</taxon>
        <taxon>Vertebrata</taxon>
        <taxon>Euteleostomi</taxon>
        <taxon>Mammalia</taxon>
        <taxon>Eutheria</taxon>
        <taxon>Euarchontoglires</taxon>
        <taxon>Primates</taxon>
        <taxon>Haplorrhini</taxon>
        <taxon>Catarrhini</taxon>
        <taxon>Hominidae</taxon>
        <taxon>Homo</taxon>
    </lineage>
</organism>
<keyword id="KW-0225">Disease variant</keyword>
<keyword id="KW-0597">Phosphoprotein</keyword>
<keyword id="KW-1267">Proteomics identification</keyword>
<keyword id="KW-1185">Reference proteome</keyword>
<keyword id="KW-0728">SH3 domain</keyword>
<proteinExistence type="evidence at protein level"/>
<protein>
    <recommendedName>
        <fullName>SAM and SH3 domain-containing protein 3</fullName>
    </recommendedName>
    <alternativeName>
        <fullName>SH3 protein expressed in lymphocytes homolog</fullName>
    </alternativeName>
</protein>
<accession>O75995</accession>
<accession>A6NCH1</accession>
<accession>A8K7K8</accession>
<accession>Q5JZ38</accession>
<comment type="function">
    <text evidence="1">May function as a signaling adapter protein in lymphocytes.</text>
</comment>
<comment type="disease" evidence="6 7">
    <disease id="DI-06439">
        <name>Immunodeficiency 102</name>
        <acronym>IMD102</acronym>
        <description>An X-linked recessive disorder characterized by recurrent sinopulmonary, cutaneous and mucosal infections, and refractory autoimmune cytopenias that appear in early childhood. Affected individuals have bacterial, viral, and fungal infections, as well as hemolytic anemia, thrombocytopenia, lymphopenia, and decreased NK cells. The disorder may also manifest as a hyperinflammatory state with immune dysregulation.</description>
        <dbReference type="MIM" id="301082"/>
    </disease>
    <text>The disease is caused by variants affecting the gene represented in this entry.</text>
</comment>
<dbReference type="EMBL" id="AL049683">
    <property type="protein sequence ID" value="CAB41255.1"/>
    <property type="molecule type" value="mRNA"/>
</dbReference>
<dbReference type="EMBL" id="AK292023">
    <property type="protein sequence ID" value="BAF84712.1"/>
    <property type="molecule type" value="mRNA"/>
</dbReference>
<dbReference type="EMBL" id="AL023653">
    <property type="status" value="NOT_ANNOTATED_CDS"/>
    <property type="molecule type" value="Genomic_DNA"/>
</dbReference>
<dbReference type="EMBL" id="CH471107">
    <property type="protein sequence ID" value="EAX11826.1"/>
    <property type="molecule type" value="Genomic_DNA"/>
</dbReference>
<dbReference type="EMBL" id="BC051881">
    <property type="protein sequence ID" value="AAH51881.1"/>
    <property type="molecule type" value="mRNA"/>
</dbReference>
<dbReference type="CCDS" id="CCDS14614.1"/>
<dbReference type="RefSeq" id="NP_061863.1">
    <property type="nucleotide sequence ID" value="NM_018990.4"/>
</dbReference>
<dbReference type="SMR" id="O75995"/>
<dbReference type="BioGRID" id="119956">
    <property type="interactions" value="3"/>
</dbReference>
<dbReference type="FunCoup" id="O75995">
    <property type="interactions" value="797"/>
</dbReference>
<dbReference type="IntAct" id="O75995">
    <property type="interactions" value="3"/>
</dbReference>
<dbReference type="STRING" id="9606.ENSP00000349359"/>
<dbReference type="GlyGen" id="O75995">
    <property type="glycosylation" value="1 site"/>
</dbReference>
<dbReference type="iPTMnet" id="O75995"/>
<dbReference type="PhosphoSitePlus" id="O75995"/>
<dbReference type="BioMuta" id="SASH3"/>
<dbReference type="MassIVE" id="O75995"/>
<dbReference type="PaxDb" id="9606-ENSP00000349359"/>
<dbReference type="PeptideAtlas" id="O75995"/>
<dbReference type="ProteomicsDB" id="50337"/>
<dbReference type="Antibodypedia" id="381">
    <property type="antibodies" value="44 antibodies from 16 providers"/>
</dbReference>
<dbReference type="DNASU" id="54440"/>
<dbReference type="Ensembl" id="ENST00000356892.4">
    <property type="protein sequence ID" value="ENSP00000349359.3"/>
    <property type="gene ID" value="ENSG00000122122.10"/>
</dbReference>
<dbReference type="GeneID" id="54440"/>
<dbReference type="KEGG" id="hsa:54440"/>
<dbReference type="MANE-Select" id="ENST00000356892.4">
    <property type="protein sequence ID" value="ENSP00000349359.3"/>
    <property type="RefSeq nucleotide sequence ID" value="NM_018990.4"/>
    <property type="RefSeq protein sequence ID" value="NP_061863.1"/>
</dbReference>
<dbReference type="UCSC" id="uc004euu.4">
    <property type="organism name" value="human"/>
</dbReference>
<dbReference type="AGR" id="HGNC:15975"/>
<dbReference type="CTD" id="54440"/>
<dbReference type="DisGeNET" id="54440"/>
<dbReference type="GeneCards" id="SASH3"/>
<dbReference type="HGNC" id="HGNC:15975">
    <property type="gene designation" value="SASH3"/>
</dbReference>
<dbReference type="HPA" id="ENSG00000122122">
    <property type="expression patterns" value="Group enriched (bone marrow, intestine, lymphoid tissue)"/>
</dbReference>
<dbReference type="MalaCards" id="SASH3"/>
<dbReference type="MIM" id="300441">
    <property type="type" value="gene"/>
</dbReference>
<dbReference type="MIM" id="301082">
    <property type="type" value="phenotype"/>
</dbReference>
<dbReference type="neXtProt" id="NX_O75995"/>
<dbReference type="OpenTargets" id="ENSG00000122122"/>
<dbReference type="Orphanet" id="653751">
    <property type="disease" value="X-linked combined immunodeficiency due to SASH3 deficiency"/>
</dbReference>
<dbReference type="PharmGKB" id="PA162402388"/>
<dbReference type="VEuPathDB" id="HostDB:ENSG00000122122"/>
<dbReference type="eggNOG" id="KOG4384">
    <property type="taxonomic scope" value="Eukaryota"/>
</dbReference>
<dbReference type="GeneTree" id="ENSGT00940000160111"/>
<dbReference type="HOGENOM" id="CLU_027875_0_0_1"/>
<dbReference type="InParanoid" id="O75995"/>
<dbReference type="OMA" id="DKEPTQK"/>
<dbReference type="OrthoDB" id="10047268at2759"/>
<dbReference type="PAN-GO" id="O75995">
    <property type="GO annotations" value="5 GO annotations based on evolutionary models"/>
</dbReference>
<dbReference type="PhylomeDB" id="O75995"/>
<dbReference type="TreeFam" id="TF350709"/>
<dbReference type="PathwayCommons" id="O75995"/>
<dbReference type="SignaLink" id="O75995"/>
<dbReference type="BioGRID-ORCS" id="54440">
    <property type="hits" value="17 hits in 764 CRISPR screens"/>
</dbReference>
<dbReference type="ChiTaRS" id="SASH3">
    <property type="organism name" value="human"/>
</dbReference>
<dbReference type="GenomeRNAi" id="54440"/>
<dbReference type="Pharos" id="O75995">
    <property type="development level" value="Tdark"/>
</dbReference>
<dbReference type="PRO" id="PR:O75995"/>
<dbReference type="Proteomes" id="UP000005640">
    <property type="component" value="Chromosome X"/>
</dbReference>
<dbReference type="RNAct" id="O75995">
    <property type="molecule type" value="protein"/>
</dbReference>
<dbReference type="Bgee" id="ENSG00000122122">
    <property type="expression patterns" value="Expressed in granulocyte and 99 other cell types or tissues"/>
</dbReference>
<dbReference type="GO" id="GO:0005737">
    <property type="term" value="C:cytoplasm"/>
    <property type="evidence" value="ECO:0000318"/>
    <property type="project" value="GO_Central"/>
</dbReference>
<dbReference type="GO" id="GO:0005634">
    <property type="term" value="C:nucleus"/>
    <property type="evidence" value="ECO:0000318"/>
    <property type="project" value="GO_Central"/>
</dbReference>
<dbReference type="GO" id="GO:0001782">
    <property type="term" value="P:B cell homeostasis"/>
    <property type="evidence" value="ECO:0007669"/>
    <property type="project" value="Ensembl"/>
</dbReference>
<dbReference type="GO" id="GO:0042100">
    <property type="term" value="P:B cell proliferation"/>
    <property type="evidence" value="ECO:0007669"/>
    <property type="project" value="Ensembl"/>
</dbReference>
<dbReference type="GO" id="GO:0043367">
    <property type="term" value="P:CD4-positive, alpha-beta T cell differentiation"/>
    <property type="evidence" value="ECO:0007669"/>
    <property type="project" value="Ensembl"/>
</dbReference>
<dbReference type="GO" id="GO:0048873">
    <property type="term" value="P:homeostasis of number of cells within a tissue"/>
    <property type="evidence" value="ECO:0007669"/>
    <property type="project" value="Ensembl"/>
</dbReference>
<dbReference type="GO" id="GO:0002821">
    <property type="term" value="P:positive regulation of adaptive immune response"/>
    <property type="evidence" value="ECO:0000318"/>
    <property type="project" value="GO_Central"/>
</dbReference>
<dbReference type="GO" id="GO:0030890">
    <property type="term" value="P:positive regulation of B cell proliferation"/>
    <property type="evidence" value="ECO:0000318"/>
    <property type="project" value="GO_Central"/>
</dbReference>
<dbReference type="GO" id="GO:0043372">
    <property type="term" value="P:positive regulation of CD4-positive, alpha-beta T cell differentiation"/>
    <property type="evidence" value="ECO:0007669"/>
    <property type="project" value="Ensembl"/>
</dbReference>
<dbReference type="GO" id="GO:0002639">
    <property type="term" value="P:positive regulation of immunoglobulin production"/>
    <property type="evidence" value="ECO:0000318"/>
    <property type="project" value="GO_Central"/>
</dbReference>
<dbReference type="GO" id="GO:0032733">
    <property type="term" value="P:positive regulation of interleukin-10 production"/>
    <property type="evidence" value="ECO:0007669"/>
    <property type="project" value="Ensembl"/>
</dbReference>
<dbReference type="GO" id="GO:0032743">
    <property type="term" value="P:positive regulation of interleukin-2 production"/>
    <property type="evidence" value="ECO:0007669"/>
    <property type="project" value="Ensembl"/>
</dbReference>
<dbReference type="GO" id="GO:0032753">
    <property type="term" value="P:positive regulation of interleukin-4 production"/>
    <property type="evidence" value="ECO:0007669"/>
    <property type="project" value="Ensembl"/>
</dbReference>
<dbReference type="GO" id="GO:0046622">
    <property type="term" value="P:positive regulation of organ growth"/>
    <property type="evidence" value="ECO:0007669"/>
    <property type="project" value="Ensembl"/>
</dbReference>
<dbReference type="GO" id="GO:0002726">
    <property type="term" value="P:positive regulation of T cell cytokine production"/>
    <property type="evidence" value="ECO:0007669"/>
    <property type="project" value="Ensembl"/>
</dbReference>
<dbReference type="GO" id="GO:0042102">
    <property type="term" value="P:positive regulation of T cell proliferation"/>
    <property type="evidence" value="ECO:0007669"/>
    <property type="project" value="Ensembl"/>
</dbReference>
<dbReference type="GO" id="GO:0032760">
    <property type="term" value="P:positive regulation of tumor necrosis factor production"/>
    <property type="evidence" value="ECO:0007669"/>
    <property type="project" value="Ensembl"/>
</dbReference>
<dbReference type="GO" id="GO:0032729">
    <property type="term" value="P:positive regulation of type II interferon production"/>
    <property type="evidence" value="ECO:0007669"/>
    <property type="project" value="Ensembl"/>
</dbReference>
<dbReference type="GO" id="GO:1902531">
    <property type="term" value="P:regulation of intracellular signal transduction"/>
    <property type="evidence" value="ECO:0000318"/>
    <property type="project" value="GO_Central"/>
</dbReference>
<dbReference type="GO" id="GO:0042098">
    <property type="term" value="P:T cell proliferation"/>
    <property type="evidence" value="ECO:0007669"/>
    <property type="project" value="Ensembl"/>
</dbReference>
<dbReference type="CDD" id="cd11968">
    <property type="entry name" value="SH3_SASH3"/>
    <property type="match status" value="1"/>
</dbReference>
<dbReference type="FunFam" id="1.10.150.50:FF:000024">
    <property type="entry name" value="Putative sam and sh3 domain-containing protein 1"/>
    <property type="match status" value="1"/>
</dbReference>
<dbReference type="FunFam" id="2.30.30.40:FF:000021">
    <property type="entry name" value="Putative sam and sh3 domain-containing protein 1"/>
    <property type="match status" value="1"/>
</dbReference>
<dbReference type="Gene3D" id="2.30.30.40">
    <property type="entry name" value="SH3 Domains"/>
    <property type="match status" value="1"/>
</dbReference>
<dbReference type="Gene3D" id="1.10.150.50">
    <property type="entry name" value="Transcription Factor, Ets-1"/>
    <property type="match status" value="1"/>
</dbReference>
<dbReference type="InterPro" id="IPR001660">
    <property type="entry name" value="SAM"/>
</dbReference>
<dbReference type="InterPro" id="IPR051725">
    <property type="entry name" value="SAM-SH3_domain_protein"/>
</dbReference>
<dbReference type="InterPro" id="IPR013761">
    <property type="entry name" value="SAM/pointed_sf"/>
</dbReference>
<dbReference type="InterPro" id="IPR035721">
    <property type="entry name" value="SASH3_SH3"/>
</dbReference>
<dbReference type="InterPro" id="IPR036028">
    <property type="entry name" value="SH3-like_dom_sf"/>
</dbReference>
<dbReference type="InterPro" id="IPR001452">
    <property type="entry name" value="SH3_domain"/>
</dbReference>
<dbReference type="InterPro" id="IPR021090">
    <property type="entry name" value="SPIDER"/>
</dbReference>
<dbReference type="PANTHER" id="PTHR12301:SF5">
    <property type="entry name" value="SAM AND SH3 DOMAIN-CONTAINING PROTEIN 3"/>
    <property type="match status" value="1"/>
</dbReference>
<dbReference type="PANTHER" id="PTHR12301">
    <property type="entry name" value="SAM-DOMAIN, SH3 AND NUCLEAR LOCALIZATION SIGNALS PROTEIN RELATED"/>
    <property type="match status" value="1"/>
</dbReference>
<dbReference type="Pfam" id="PF00536">
    <property type="entry name" value="SAM_1"/>
    <property type="match status" value="1"/>
</dbReference>
<dbReference type="Pfam" id="PF07653">
    <property type="entry name" value="SH3_2"/>
    <property type="match status" value="1"/>
</dbReference>
<dbReference type="Pfam" id="PF12485">
    <property type="entry name" value="SPIDER"/>
    <property type="match status" value="1"/>
</dbReference>
<dbReference type="SMART" id="SM00454">
    <property type="entry name" value="SAM"/>
    <property type="match status" value="1"/>
</dbReference>
<dbReference type="SMART" id="SM00326">
    <property type="entry name" value="SH3"/>
    <property type="match status" value="1"/>
</dbReference>
<dbReference type="SUPFAM" id="SSF47769">
    <property type="entry name" value="SAM/Pointed domain"/>
    <property type="match status" value="1"/>
</dbReference>
<dbReference type="SUPFAM" id="SSF50044">
    <property type="entry name" value="SH3-domain"/>
    <property type="match status" value="1"/>
</dbReference>
<dbReference type="PROSITE" id="PS50105">
    <property type="entry name" value="SAM_DOMAIN"/>
    <property type="match status" value="1"/>
</dbReference>
<dbReference type="PROSITE" id="PS50002">
    <property type="entry name" value="SH3"/>
    <property type="match status" value="1"/>
</dbReference>
<feature type="chain" id="PRO_0000071962" description="SAM and SH3 domain-containing protein 3">
    <location>
        <begin position="1"/>
        <end position="380"/>
    </location>
</feature>
<feature type="domain" description="SH3" evidence="3">
    <location>
        <begin position="173"/>
        <end position="234"/>
    </location>
</feature>
<feature type="domain" description="SAM" evidence="2">
    <location>
        <begin position="252"/>
        <end position="316"/>
    </location>
</feature>
<feature type="region of interest" description="Disordered" evidence="4">
    <location>
        <begin position="1"/>
        <end position="76"/>
    </location>
</feature>
<feature type="region of interest" description="Disordered" evidence="4">
    <location>
        <begin position="98"/>
        <end position="174"/>
    </location>
</feature>
<feature type="region of interest" description="Disordered" evidence="4">
    <location>
        <begin position="237"/>
        <end position="256"/>
    </location>
</feature>
<feature type="region of interest" description="Disordered" evidence="4">
    <location>
        <begin position="318"/>
        <end position="380"/>
    </location>
</feature>
<feature type="compositionally biased region" description="Low complexity" evidence="4">
    <location>
        <begin position="22"/>
        <end position="41"/>
    </location>
</feature>
<feature type="compositionally biased region" description="Polar residues" evidence="4">
    <location>
        <begin position="143"/>
        <end position="152"/>
    </location>
</feature>
<feature type="compositionally biased region" description="Low complexity" evidence="4">
    <location>
        <begin position="153"/>
        <end position="164"/>
    </location>
</feature>
<feature type="compositionally biased region" description="Basic residues" evidence="4">
    <location>
        <begin position="241"/>
        <end position="255"/>
    </location>
</feature>
<feature type="compositionally biased region" description="Acidic residues" evidence="4">
    <location>
        <begin position="318"/>
        <end position="327"/>
    </location>
</feature>
<feature type="modified residue" description="Phosphoserine" evidence="5">
    <location>
        <position position="27"/>
    </location>
</feature>
<feature type="modified residue" description="Phosphoserine" evidence="9">
    <location>
        <position position="34"/>
    </location>
</feature>
<feature type="modified residue" description="Phosphoserine" evidence="9">
    <location>
        <position position="42"/>
    </location>
</feature>
<feature type="modified residue" description="Phosphothreonine" evidence="9">
    <location>
        <position position="61"/>
    </location>
</feature>
<feature type="modified residue" description="Phosphoserine" evidence="9">
    <location>
        <position position="97"/>
    </location>
</feature>
<feature type="modified residue" description="Phosphothreonine" evidence="9">
    <location>
        <position position="103"/>
    </location>
</feature>
<feature type="modified residue" description="Phosphoserine" evidence="9">
    <location>
        <position position="110"/>
    </location>
</feature>
<feature type="modified residue" description="Phosphothreonine" evidence="9">
    <location>
        <position position="112"/>
    </location>
</feature>
<feature type="modified residue" description="Phosphoserine" evidence="9">
    <location>
        <position position="113"/>
    </location>
</feature>
<feature type="modified residue" description="Phosphotyrosine" evidence="9">
    <location>
        <position position="116"/>
    </location>
</feature>
<feature type="modified residue" description="Phosphoserine" evidence="9">
    <location>
        <position position="120"/>
    </location>
</feature>
<feature type="modified residue" description="Phosphothreonine" evidence="9">
    <location>
        <position position="318"/>
    </location>
</feature>
<feature type="modified residue" description="Phosphoserine" evidence="9">
    <location>
        <position position="320"/>
    </location>
</feature>
<feature type="sequence variant" id="VAR_087463" description="In IMD102; loss of protein expression." evidence="7">
    <location>
        <begin position="169"/>
        <end position="380"/>
    </location>
</feature>
<feature type="sequence variant" id="VAR_087464" description="In IMD102; loss of protein expression; patient T cells show decreased proliferation and cell cycle progression and increased apoptosis; functional signaling defects of the T cell receptor." evidence="6">
    <location>
        <begin position="245"/>
        <end position="380"/>
    </location>
</feature>
<feature type="sequence variant" id="VAR_087465" description="In IMD102; loss of protein expression; patient T cells show decreased proliferation and cell cycle progression and increased apoptosis; functional signaling defects of the T cell receptor." evidence="6">
    <location>
        <begin position="288"/>
        <end position="380"/>
    </location>
</feature>
<feature type="sequence variant" id="VAR_087466" description="In IMD102; decreased protein abundance; patient T cells show decreased proliferation and cell cycle progression and increased apoptosis; functional signaling defects of the T cell receptor; dbSNP:rs2124084444." evidence="6">
    <original>R</original>
    <variation>C</variation>
    <location>
        <position position="347"/>
    </location>
</feature>
<feature type="sequence conflict" description="In Ref. 2; BAF84712." evidence="8" ref="2">
    <original>V</original>
    <variation>A</variation>
    <location>
        <position position="79"/>
    </location>
</feature>
<feature type="sequence conflict" description="In Ref. 2; BAF84712." evidence="8" ref="2">
    <original>A</original>
    <variation>V</variation>
    <location>
        <position position="365"/>
    </location>
</feature>
<evidence type="ECO:0000250" key="1">
    <source>
        <dbReference type="UniProtKB" id="Q8K352"/>
    </source>
</evidence>
<evidence type="ECO:0000255" key="2">
    <source>
        <dbReference type="PROSITE-ProRule" id="PRU00184"/>
    </source>
</evidence>
<evidence type="ECO:0000255" key="3">
    <source>
        <dbReference type="PROSITE-ProRule" id="PRU00192"/>
    </source>
</evidence>
<evidence type="ECO:0000256" key="4">
    <source>
        <dbReference type="SAM" id="MobiDB-lite"/>
    </source>
</evidence>
<evidence type="ECO:0000269" key="5">
    <source>
    </source>
</evidence>
<evidence type="ECO:0000269" key="6">
    <source>
    </source>
</evidence>
<evidence type="ECO:0000269" key="7">
    <source>
    </source>
</evidence>
<evidence type="ECO:0000305" key="8"/>
<evidence type="ECO:0007744" key="9">
    <source>
    </source>
</evidence>
<gene>
    <name type="primary">SASH3</name>
    <name type="synonym">CXorf9</name>
    <name type="synonym">SLY</name>
</gene>
<reference key="1">
    <citation type="submission" date="1999-04" db="EMBL/GenBank/DDBJ databases">
        <authorList>
            <person name="Rhodes S."/>
        </authorList>
    </citation>
    <scope>NUCLEOTIDE SEQUENCE [MRNA]</scope>
</reference>
<reference key="2">
    <citation type="journal article" date="2004" name="Nat. Genet.">
        <title>Complete sequencing and characterization of 21,243 full-length human cDNAs.</title>
        <authorList>
            <person name="Ota T."/>
            <person name="Suzuki Y."/>
            <person name="Nishikawa T."/>
            <person name="Otsuki T."/>
            <person name="Sugiyama T."/>
            <person name="Irie R."/>
            <person name="Wakamatsu A."/>
            <person name="Hayashi K."/>
            <person name="Sato H."/>
            <person name="Nagai K."/>
            <person name="Kimura K."/>
            <person name="Makita H."/>
            <person name="Sekine M."/>
            <person name="Obayashi M."/>
            <person name="Nishi T."/>
            <person name="Shibahara T."/>
            <person name="Tanaka T."/>
            <person name="Ishii S."/>
            <person name="Yamamoto J."/>
            <person name="Saito K."/>
            <person name="Kawai Y."/>
            <person name="Isono Y."/>
            <person name="Nakamura Y."/>
            <person name="Nagahari K."/>
            <person name="Murakami K."/>
            <person name="Yasuda T."/>
            <person name="Iwayanagi T."/>
            <person name="Wagatsuma M."/>
            <person name="Shiratori A."/>
            <person name="Sudo H."/>
            <person name="Hosoiri T."/>
            <person name="Kaku Y."/>
            <person name="Kodaira H."/>
            <person name="Kondo H."/>
            <person name="Sugawara M."/>
            <person name="Takahashi M."/>
            <person name="Kanda K."/>
            <person name="Yokoi T."/>
            <person name="Furuya T."/>
            <person name="Kikkawa E."/>
            <person name="Omura Y."/>
            <person name="Abe K."/>
            <person name="Kamihara K."/>
            <person name="Katsuta N."/>
            <person name="Sato K."/>
            <person name="Tanikawa M."/>
            <person name="Yamazaki M."/>
            <person name="Ninomiya K."/>
            <person name="Ishibashi T."/>
            <person name="Yamashita H."/>
            <person name="Murakawa K."/>
            <person name="Fujimori K."/>
            <person name="Tanai H."/>
            <person name="Kimata M."/>
            <person name="Watanabe M."/>
            <person name="Hiraoka S."/>
            <person name="Chiba Y."/>
            <person name="Ishida S."/>
            <person name="Ono Y."/>
            <person name="Takiguchi S."/>
            <person name="Watanabe S."/>
            <person name="Yosida M."/>
            <person name="Hotuta T."/>
            <person name="Kusano J."/>
            <person name="Kanehori K."/>
            <person name="Takahashi-Fujii A."/>
            <person name="Hara H."/>
            <person name="Tanase T.-O."/>
            <person name="Nomura Y."/>
            <person name="Togiya S."/>
            <person name="Komai F."/>
            <person name="Hara R."/>
            <person name="Takeuchi K."/>
            <person name="Arita M."/>
            <person name="Imose N."/>
            <person name="Musashino K."/>
            <person name="Yuuki H."/>
            <person name="Oshima A."/>
            <person name="Sasaki N."/>
            <person name="Aotsuka S."/>
            <person name="Yoshikawa Y."/>
            <person name="Matsunawa H."/>
            <person name="Ichihara T."/>
            <person name="Shiohata N."/>
            <person name="Sano S."/>
            <person name="Moriya S."/>
            <person name="Momiyama H."/>
            <person name="Satoh N."/>
            <person name="Takami S."/>
            <person name="Terashima Y."/>
            <person name="Suzuki O."/>
            <person name="Nakagawa S."/>
            <person name="Senoh A."/>
            <person name="Mizoguchi H."/>
            <person name="Goto Y."/>
            <person name="Shimizu F."/>
            <person name="Wakebe H."/>
            <person name="Hishigaki H."/>
            <person name="Watanabe T."/>
            <person name="Sugiyama A."/>
            <person name="Takemoto M."/>
            <person name="Kawakami B."/>
            <person name="Yamazaki M."/>
            <person name="Watanabe K."/>
            <person name="Kumagai A."/>
            <person name="Itakura S."/>
            <person name="Fukuzumi Y."/>
            <person name="Fujimori Y."/>
            <person name="Komiyama M."/>
            <person name="Tashiro H."/>
            <person name="Tanigami A."/>
            <person name="Fujiwara T."/>
            <person name="Ono T."/>
            <person name="Yamada K."/>
            <person name="Fujii Y."/>
            <person name="Ozaki K."/>
            <person name="Hirao M."/>
            <person name="Ohmori Y."/>
            <person name="Kawabata A."/>
            <person name="Hikiji T."/>
            <person name="Kobatake N."/>
            <person name="Inagaki H."/>
            <person name="Ikema Y."/>
            <person name="Okamoto S."/>
            <person name="Okitani R."/>
            <person name="Kawakami T."/>
            <person name="Noguchi S."/>
            <person name="Itoh T."/>
            <person name="Shigeta K."/>
            <person name="Senba T."/>
            <person name="Matsumura K."/>
            <person name="Nakajima Y."/>
            <person name="Mizuno T."/>
            <person name="Morinaga M."/>
            <person name="Sasaki M."/>
            <person name="Togashi T."/>
            <person name="Oyama M."/>
            <person name="Hata H."/>
            <person name="Watanabe M."/>
            <person name="Komatsu T."/>
            <person name="Mizushima-Sugano J."/>
            <person name="Satoh T."/>
            <person name="Shirai Y."/>
            <person name="Takahashi Y."/>
            <person name="Nakagawa K."/>
            <person name="Okumura K."/>
            <person name="Nagase T."/>
            <person name="Nomura N."/>
            <person name="Kikuchi H."/>
            <person name="Masuho Y."/>
            <person name="Yamashita R."/>
            <person name="Nakai K."/>
            <person name="Yada T."/>
            <person name="Nakamura Y."/>
            <person name="Ohara O."/>
            <person name="Isogai T."/>
            <person name="Sugano S."/>
        </authorList>
    </citation>
    <scope>NUCLEOTIDE SEQUENCE [LARGE SCALE MRNA]</scope>
    <source>
        <tissue>Spleen</tissue>
    </source>
</reference>
<reference key="3">
    <citation type="journal article" date="2005" name="Nature">
        <title>The DNA sequence of the human X chromosome.</title>
        <authorList>
            <person name="Ross M.T."/>
            <person name="Grafham D.V."/>
            <person name="Coffey A.J."/>
            <person name="Scherer S."/>
            <person name="McLay K."/>
            <person name="Muzny D."/>
            <person name="Platzer M."/>
            <person name="Howell G.R."/>
            <person name="Burrows C."/>
            <person name="Bird C.P."/>
            <person name="Frankish A."/>
            <person name="Lovell F.L."/>
            <person name="Howe K.L."/>
            <person name="Ashurst J.L."/>
            <person name="Fulton R.S."/>
            <person name="Sudbrak R."/>
            <person name="Wen G."/>
            <person name="Jones M.C."/>
            <person name="Hurles M.E."/>
            <person name="Andrews T.D."/>
            <person name="Scott C.E."/>
            <person name="Searle S."/>
            <person name="Ramser J."/>
            <person name="Whittaker A."/>
            <person name="Deadman R."/>
            <person name="Carter N.P."/>
            <person name="Hunt S.E."/>
            <person name="Chen R."/>
            <person name="Cree A."/>
            <person name="Gunaratne P."/>
            <person name="Havlak P."/>
            <person name="Hodgson A."/>
            <person name="Metzker M.L."/>
            <person name="Richards S."/>
            <person name="Scott G."/>
            <person name="Steffen D."/>
            <person name="Sodergren E."/>
            <person name="Wheeler D.A."/>
            <person name="Worley K.C."/>
            <person name="Ainscough R."/>
            <person name="Ambrose K.D."/>
            <person name="Ansari-Lari M.A."/>
            <person name="Aradhya S."/>
            <person name="Ashwell R.I."/>
            <person name="Babbage A.K."/>
            <person name="Bagguley C.L."/>
            <person name="Ballabio A."/>
            <person name="Banerjee R."/>
            <person name="Barker G.E."/>
            <person name="Barlow K.F."/>
            <person name="Barrett I.P."/>
            <person name="Bates K.N."/>
            <person name="Beare D.M."/>
            <person name="Beasley H."/>
            <person name="Beasley O."/>
            <person name="Beck A."/>
            <person name="Bethel G."/>
            <person name="Blechschmidt K."/>
            <person name="Brady N."/>
            <person name="Bray-Allen S."/>
            <person name="Bridgeman A.M."/>
            <person name="Brown A.J."/>
            <person name="Brown M.J."/>
            <person name="Bonnin D."/>
            <person name="Bruford E.A."/>
            <person name="Buhay C."/>
            <person name="Burch P."/>
            <person name="Burford D."/>
            <person name="Burgess J."/>
            <person name="Burrill W."/>
            <person name="Burton J."/>
            <person name="Bye J.M."/>
            <person name="Carder C."/>
            <person name="Carrel L."/>
            <person name="Chako J."/>
            <person name="Chapman J.C."/>
            <person name="Chavez D."/>
            <person name="Chen E."/>
            <person name="Chen G."/>
            <person name="Chen Y."/>
            <person name="Chen Z."/>
            <person name="Chinault C."/>
            <person name="Ciccodicola A."/>
            <person name="Clark S.Y."/>
            <person name="Clarke G."/>
            <person name="Clee C.M."/>
            <person name="Clegg S."/>
            <person name="Clerc-Blankenburg K."/>
            <person name="Clifford K."/>
            <person name="Cobley V."/>
            <person name="Cole C.G."/>
            <person name="Conquer J.S."/>
            <person name="Corby N."/>
            <person name="Connor R.E."/>
            <person name="David R."/>
            <person name="Davies J."/>
            <person name="Davis C."/>
            <person name="Davis J."/>
            <person name="Delgado O."/>
            <person name="Deshazo D."/>
            <person name="Dhami P."/>
            <person name="Ding Y."/>
            <person name="Dinh H."/>
            <person name="Dodsworth S."/>
            <person name="Draper H."/>
            <person name="Dugan-Rocha S."/>
            <person name="Dunham A."/>
            <person name="Dunn M."/>
            <person name="Durbin K.J."/>
            <person name="Dutta I."/>
            <person name="Eades T."/>
            <person name="Ellwood M."/>
            <person name="Emery-Cohen A."/>
            <person name="Errington H."/>
            <person name="Evans K.L."/>
            <person name="Faulkner L."/>
            <person name="Francis F."/>
            <person name="Frankland J."/>
            <person name="Fraser A.E."/>
            <person name="Galgoczy P."/>
            <person name="Gilbert J."/>
            <person name="Gill R."/>
            <person name="Gloeckner G."/>
            <person name="Gregory S.G."/>
            <person name="Gribble S."/>
            <person name="Griffiths C."/>
            <person name="Grocock R."/>
            <person name="Gu Y."/>
            <person name="Gwilliam R."/>
            <person name="Hamilton C."/>
            <person name="Hart E.A."/>
            <person name="Hawes A."/>
            <person name="Heath P.D."/>
            <person name="Heitmann K."/>
            <person name="Hennig S."/>
            <person name="Hernandez J."/>
            <person name="Hinzmann B."/>
            <person name="Ho S."/>
            <person name="Hoffs M."/>
            <person name="Howden P.J."/>
            <person name="Huckle E.J."/>
            <person name="Hume J."/>
            <person name="Hunt P.J."/>
            <person name="Hunt A.R."/>
            <person name="Isherwood J."/>
            <person name="Jacob L."/>
            <person name="Johnson D."/>
            <person name="Jones S."/>
            <person name="de Jong P.J."/>
            <person name="Joseph S.S."/>
            <person name="Keenan S."/>
            <person name="Kelly S."/>
            <person name="Kershaw J.K."/>
            <person name="Khan Z."/>
            <person name="Kioschis P."/>
            <person name="Klages S."/>
            <person name="Knights A.J."/>
            <person name="Kosiura A."/>
            <person name="Kovar-Smith C."/>
            <person name="Laird G.K."/>
            <person name="Langford C."/>
            <person name="Lawlor S."/>
            <person name="Leversha M."/>
            <person name="Lewis L."/>
            <person name="Liu W."/>
            <person name="Lloyd C."/>
            <person name="Lloyd D.M."/>
            <person name="Loulseged H."/>
            <person name="Loveland J.E."/>
            <person name="Lovell J.D."/>
            <person name="Lozado R."/>
            <person name="Lu J."/>
            <person name="Lyne R."/>
            <person name="Ma J."/>
            <person name="Maheshwari M."/>
            <person name="Matthews L.H."/>
            <person name="McDowall J."/>
            <person name="McLaren S."/>
            <person name="McMurray A."/>
            <person name="Meidl P."/>
            <person name="Meitinger T."/>
            <person name="Milne S."/>
            <person name="Miner G."/>
            <person name="Mistry S.L."/>
            <person name="Morgan M."/>
            <person name="Morris S."/>
            <person name="Mueller I."/>
            <person name="Mullikin J.C."/>
            <person name="Nguyen N."/>
            <person name="Nordsiek G."/>
            <person name="Nyakatura G."/>
            <person name="O'dell C.N."/>
            <person name="Okwuonu G."/>
            <person name="Palmer S."/>
            <person name="Pandian R."/>
            <person name="Parker D."/>
            <person name="Parrish J."/>
            <person name="Pasternak S."/>
            <person name="Patel D."/>
            <person name="Pearce A.V."/>
            <person name="Pearson D.M."/>
            <person name="Pelan S.E."/>
            <person name="Perez L."/>
            <person name="Porter K.M."/>
            <person name="Ramsey Y."/>
            <person name="Reichwald K."/>
            <person name="Rhodes S."/>
            <person name="Ridler K.A."/>
            <person name="Schlessinger D."/>
            <person name="Schueler M.G."/>
            <person name="Sehra H.K."/>
            <person name="Shaw-Smith C."/>
            <person name="Shen H."/>
            <person name="Sheridan E.M."/>
            <person name="Shownkeen R."/>
            <person name="Skuce C.D."/>
            <person name="Smith M.L."/>
            <person name="Sotheran E.C."/>
            <person name="Steingruber H.E."/>
            <person name="Steward C.A."/>
            <person name="Storey R."/>
            <person name="Swann R.M."/>
            <person name="Swarbreck D."/>
            <person name="Tabor P.E."/>
            <person name="Taudien S."/>
            <person name="Taylor T."/>
            <person name="Teague B."/>
            <person name="Thomas K."/>
            <person name="Thorpe A."/>
            <person name="Timms K."/>
            <person name="Tracey A."/>
            <person name="Trevanion S."/>
            <person name="Tromans A.C."/>
            <person name="d'Urso M."/>
            <person name="Verduzco D."/>
            <person name="Villasana D."/>
            <person name="Waldron L."/>
            <person name="Wall M."/>
            <person name="Wang Q."/>
            <person name="Warren J."/>
            <person name="Warry G.L."/>
            <person name="Wei X."/>
            <person name="West A."/>
            <person name="Whitehead S.L."/>
            <person name="Whiteley M.N."/>
            <person name="Wilkinson J.E."/>
            <person name="Willey D.L."/>
            <person name="Williams G."/>
            <person name="Williams L."/>
            <person name="Williamson A."/>
            <person name="Williamson H."/>
            <person name="Wilming L."/>
            <person name="Woodmansey R.L."/>
            <person name="Wray P.W."/>
            <person name="Yen J."/>
            <person name="Zhang J."/>
            <person name="Zhou J."/>
            <person name="Zoghbi H."/>
            <person name="Zorilla S."/>
            <person name="Buck D."/>
            <person name="Reinhardt R."/>
            <person name="Poustka A."/>
            <person name="Rosenthal A."/>
            <person name="Lehrach H."/>
            <person name="Meindl A."/>
            <person name="Minx P.J."/>
            <person name="Hillier L.W."/>
            <person name="Willard H.F."/>
            <person name="Wilson R.K."/>
            <person name="Waterston R.H."/>
            <person name="Rice C.M."/>
            <person name="Vaudin M."/>
            <person name="Coulson A."/>
            <person name="Nelson D.L."/>
            <person name="Weinstock G."/>
            <person name="Sulston J.E."/>
            <person name="Durbin R.M."/>
            <person name="Hubbard T."/>
            <person name="Gibbs R.A."/>
            <person name="Beck S."/>
            <person name="Rogers J."/>
            <person name="Bentley D.R."/>
        </authorList>
    </citation>
    <scope>NUCLEOTIDE SEQUENCE [LARGE SCALE GENOMIC DNA]</scope>
</reference>
<reference key="4">
    <citation type="submission" date="2005-09" db="EMBL/GenBank/DDBJ databases">
        <authorList>
            <person name="Mural R.J."/>
            <person name="Istrail S."/>
            <person name="Sutton G.G."/>
            <person name="Florea L."/>
            <person name="Halpern A.L."/>
            <person name="Mobarry C.M."/>
            <person name="Lippert R."/>
            <person name="Walenz B."/>
            <person name="Shatkay H."/>
            <person name="Dew I."/>
            <person name="Miller J.R."/>
            <person name="Flanigan M.J."/>
            <person name="Edwards N.J."/>
            <person name="Bolanos R."/>
            <person name="Fasulo D."/>
            <person name="Halldorsson B.V."/>
            <person name="Hannenhalli S."/>
            <person name="Turner R."/>
            <person name="Yooseph S."/>
            <person name="Lu F."/>
            <person name="Nusskern D.R."/>
            <person name="Shue B.C."/>
            <person name="Zheng X.H."/>
            <person name="Zhong F."/>
            <person name="Delcher A.L."/>
            <person name="Huson D.H."/>
            <person name="Kravitz S.A."/>
            <person name="Mouchard L."/>
            <person name="Reinert K."/>
            <person name="Remington K.A."/>
            <person name="Clark A.G."/>
            <person name="Waterman M.S."/>
            <person name="Eichler E.E."/>
            <person name="Adams M.D."/>
            <person name="Hunkapiller M.W."/>
            <person name="Myers E.W."/>
            <person name="Venter J.C."/>
        </authorList>
    </citation>
    <scope>NUCLEOTIDE SEQUENCE [LARGE SCALE GENOMIC DNA]</scope>
</reference>
<reference key="5">
    <citation type="journal article" date="2004" name="Genome Res.">
        <title>The status, quality, and expansion of the NIH full-length cDNA project: the Mammalian Gene Collection (MGC).</title>
        <authorList>
            <consortium name="The MGC Project Team"/>
        </authorList>
    </citation>
    <scope>NUCLEOTIDE SEQUENCE [LARGE SCALE MRNA]</scope>
    <source>
        <tissue>Testis</tissue>
    </source>
</reference>
<reference key="6">
    <citation type="journal article" date="2003" name="J. Biol. Chem.">
        <title>Approaches to define antigen receptor-induced serine kinase signal transduction pathways.</title>
        <authorList>
            <person name="Astoul E."/>
            <person name="Laurence A.D."/>
            <person name="Totty N."/>
            <person name="Beer S."/>
            <person name="Alexander D.R."/>
            <person name="Cantrell D.A."/>
        </authorList>
    </citation>
    <scope>PHOSPHORYLATION AT SER-27</scope>
</reference>
<reference key="7">
    <citation type="journal article" date="2009" name="Sci. Signal.">
        <title>Quantitative phosphoproteomic analysis of T cell receptor signaling reveals system-wide modulation of protein-protein interactions.</title>
        <authorList>
            <person name="Mayya V."/>
            <person name="Lundgren D.H."/>
            <person name="Hwang S.-I."/>
            <person name="Rezaul K."/>
            <person name="Wu L."/>
            <person name="Eng J.K."/>
            <person name="Rodionov V."/>
            <person name="Han D.K."/>
        </authorList>
    </citation>
    <scope>PHOSPHORYLATION [LARGE SCALE ANALYSIS] AT SER-34; SER-42; THR-61; SER-97; THR-103; SER-110; THR-112; SER-113; TYR-116; SER-120; THR-318 AND SER-320</scope>
    <scope>IDENTIFICATION BY MASS SPECTROMETRY [LARGE SCALE ANALYSIS]</scope>
    <source>
        <tissue>Leukemic T-cell</tissue>
    </source>
</reference>
<reference key="8">
    <citation type="journal article" date="2011" name="BMC Syst. Biol.">
        <title>Initial characterization of the human central proteome.</title>
        <authorList>
            <person name="Burkard T.R."/>
            <person name="Planyavsky M."/>
            <person name="Kaupe I."/>
            <person name="Breitwieser F.P."/>
            <person name="Buerckstuemmer T."/>
            <person name="Bennett K.L."/>
            <person name="Superti-Furga G."/>
            <person name="Colinge J."/>
        </authorList>
    </citation>
    <scope>IDENTIFICATION BY MASS SPECTROMETRY [LARGE SCALE ANALYSIS]</scope>
</reference>
<reference key="9">
    <citation type="journal article" date="2021" name="Blood">
        <title>SASH3 variants cause a novel form of X-linked combined immunodeficiency with immune dysregulation.</title>
        <authorList>
            <person name="Delmonte O.M."/>
            <person name="Bergerson J.R.E."/>
            <person name="Kawai T."/>
            <person name="Kuehn H.S."/>
            <person name="McDermott D.H."/>
            <person name="Cortese I."/>
            <person name="Zimmermann M.T."/>
            <person name="Dobbs A.K."/>
            <person name="Bosticardo M."/>
            <person name="Fink D."/>
            <person name="Majumdar S."/>
            <person name="Palterer B."/>
            <person name="Pala F."/>
            <person name="Dsouza N.R."/>
            <person name="Pouzolles M."/>
            <person name="Taylor N."/>
            <person name="Calvo K.R."/>
            <person name="Daley S.R."/>
            <person name="Velez D."/>
            <person name="Agharahimi A."/>
            <person name="Myint-Hpu K."/>
            <person name="Dropulic L.K."/>
            <person name="Lyons J.J."/>
            <person name="Holland S.M."/>
            <person name="Freeman A.F."/>
            <person name="Ghosh R."/>
            <person name="Similuk M.B."/>
            <person name="Niemela J.E."/>
            <person name="Stoddard J."/>
            <person name="Kuhns D.B."/>
            <person name="Urrutia R."/>
            <person name="Rosenzweig S.D."/>
            <person name="Walkiewicz M.A."/>
            <person name="Murphy P.M."/>
            <person name="Notarangelo L.D."/>
        </authorList>
    </citation>
    <scope>INVOLVEMENT IN IMD102</scope>
    <scope>VARIANTS IMD102 245-ARG--PRO-380 DEL; 288-ARG--PRO-380 DEL AND CYS-347</scope>
    <scope>CHARACTERIZATION OF VARIANTS IMD102 245-ARG--PRO-380 DEL; 288-ARG--PRO-380 DEL AND CYS-347</scope>
</reference>
<reference key="10">
    <citation type="journal article" date="2022" name="Front. Immunol.">
        <title>Case Report: X-Linked SASH3 Deficiency Presenting as a Common Variable Immunodeficiency.</title>
        <authorList>
            <person name="Labrador-Horrillo M."/>
            <person name="Franco-Jarava C."/>
            <person name="Garcia-Prat M."/>
            <person name="Parra-Martinez A."/>
            <person name="Antolin M."/>
            <person name="Salgado-Perandres S."/>
            <person name="Aguilo-Cucurull A."/>
            <person name="Martinez-Gallo M."/>
            <person name="Colobran R."/>
        </authorList>
    </citation>
    <scope>VARIANT IMD102 169-GLN--PRO-380 DEL</scope>
    <scope>CHARACTERIZATION OF VARIANT IMD102 169-GLN--PRO-380 DEL</scope>
</reference>